<dbReference type="EMBL" id="AM942759">
    <property type="protein sequence ID" value="CAR42407.1"/>
    <property type="molecule type" value="Genomic_DNA"/>
</dbReference>
<dbReference type="RefSeq" id="WP_004242731.1">
    <property type="nucleotide sequence ID" value="NC_010554.1"/>
</dbReference>
<dbReference type="SMR" id="B4ETP7"/>
<dbReference type="EnsemblBacteria" id="CAR42407">
    <property type="protein sequence ID" value="CAR42407"/>
    <property type="gene ID" value="PMI1115"/>
</dbReference>
<dbReference type="GeneID" id="6802987"/>
<dbReference type="KEGG" id="pmr:PMI1115"/>
<dbReference type="eggNOG" id="COG0632">
    <property type="taxonomic scope" value="Bacteria"/>
</dbReference>
<dbReference type="HOGENOM" id="CLU_087936_0_0_6"/>
<dbReference type="Proteomes" id="UP000008319">
    <property type="component" value="Chromosome"/>
</dbReference>
<dbReference type="GO" id="GO:0005737">
    <property type="term" value="C:cytoplasm"/>
    <property type="evidence" value="ECO:0007669"/>
    <property type="project" value="UniProtKB-SubCell"/>
</dbReference>
<dbReference type="GO" id="GO:0009379">
    <property type="term" value="C:Holliday junction helicase complex"/>
    <property type="evidence" value="ECO:0007669"/>
    <property type="project" value="InterPro"/>
</dbReference>
<dbReference type="GO" id="GO:0048476">
    <property type="term" value="C:Holliday junction resolvase complex"/>
    <property type="evidence" value="ECO:0007669"/>
    <property type="project" value="UniProtKB-UniRule"/>
</dbReference>
<dbReference type="GO" id="GO:0005524">
    <property type="term" value="F:ATP binding"/>
    <property type="evidence" value="ECO:0007669"/>
    <property type="project" value="InterPro"/>
</dbReference>
<dbReference type="GO" id="GO:0000400">
    <property type="term" value="F:four-way junction DNA binding"/>
    <property type="evidence" value="ECO:0007669"/>
    <property type="project" value="UniProtKB-UniRule"/>
</dbReference>
<dbReference type="GO" id="GO:0009378">
    <property type="term" value="F:four-way junction helicase activity"/>
    <property type="evidence" value="ECO:0007669"/>
    <property type="project" value="InterPro"/>
</dbReference>
<dbReference type="GO" id="GO:0006310">
    <property type="term" value="P:DNA recombination"/>
    <property type="evidence" value="ECO:0007669"/>
    <property type="project" value="UniProtKB-UniRule"/>
</dbReference>
<dbReference type="GO" id="GO:0006281">
    <property type="term" value="P:DNA repair"/>
    <property type="evidence" value="ECO:0007669"/>
    <property type="project" value="UniProtKB-UniRule"/>
</dbReference>
<dbReference type="CDD" id="cd14332">
    <property type="entry name" value="UBA_RuvA_C"/>
    <property type="match status" value="1"/>
</dbReference>
<dbReference type="FunFam" id="1.10.150.20:FF:000012">
    <property type="entry name" value="Holliday junction ATP-dependent DNA helicase RuvA"/>
    <property type="match status" value="1"/>
</dbReference>
<dbReference type="FunFam" id="2.40.50.140:FF:000083">
    <property type="entry name" value="Holliday junction ATP-dependent DNA helicase RuvA"/>
    <property type="match status" value="1"/>
</dbReference>
<dbReference type="Gene3D" id="1.10.150.20">
    <property type="entry name" value="5' to 3' exonuclease, C-terminal subdomain"/>
    <property type="match status" value="1"/>
</dbReference>
<dbReference type="Gene3D" id="1.10.8.10">
    <property type="entry name" value="DNA helicase RuvA subunit, C-terminal domain"/>
    <property type="match status" value="1"/>
</dbReference>
<dbReference type="Gene3D" id="2.40.50.140">
    <property type="entry name" value="Nucleic acid-binding proteins"/>
    <property type="match status" value="1"/>
</dbReference>
<dbReference type="HAMAP" id="MF_00031">
    <property type="entry name" value="DNA_HJ_migration_RuvA"/>
    <property type="match status" value="1"/>
</dbReference>
<dbReference type="InterPro" id="IPR013849">
    <property type="entry name" value="DNA_helicase_Holl-junc_RuvA_I"/>
</dbReference>
<dbReference type="InterPro" id="IPR003583">
    <property type="entry name" value="Hlx-hairpin-Hlx_DNA-bd_motif"/>
</dbReference>
<dbReference type="InterPro" id="IPR012340">
    <property type="entry name" value="NA-bd_OB-fold"/>
</dbReference>
<dbReference type="InterPro" id="IPR000085">
    <property type="entry name" value="RuvA"/>
</dbReference>
<dbReference type="InterPro" id="IPR010994">
    <property type="entry name" value="RuvA_2-like"/>
</dbReference>
<dbReference type="InterPro" id="IPR011114">
    <property type="entry name" value="RuvA_C"/>
</dbReference>
<dbReference type="InterPro" id="IPR036267">
    <property type="entry name" value="RuvA_C_sf"/>
</dbReference>
<dbReference type="NCBIfam" id="TIGR00084">
    <property type="entry name" value="ruvA"/>
    <property type="match status" value="1"/>
</dbReference>
<dbReference type="Pfam" id="PF14520">
    <property type="entry name" value="HHH_5"/>
    <property type="match status" value="1"/>
</dbReference>
<dbReference type="Pfam" id="PF07499">
    <property type="entry name" value="RuvA_C"/>
    <property type="match status" value="1"/>
</dbReference>
<dbReference type="Pfam" id="PF01330">
    <property type="entry name" value="RuvA_N"/>
    <property type="match status" value="1"/>
</dbReference>
<dbReference type="SMART" id="SM00278">
    <property type="entry name" value="HhH1"/>
    <property type="match status" value="2"/>
</dbReference>
<dbReference type="SUPFAM" id="SSF46929">
    <property type="entry name" value="DNA helicase RuvA subunit, C-terminal domain"/>
    <property type="match status" value="1"/>
</dbReference>
<dbReference type="SUPFAM" id="SSF50249">
    <property type="entry name" value="Nucleic acid-binding proteins"/>
    <property type="match status" value="1"/>
</dbReference>
<dbReference type="SUPFAM" id="SSF47781">
    <property type="entry name" value="RuvA domain 2-like"/>
    <property type="match status" value="1"/>
</dbReference>
<protein>
    <recommendedName>
        <fullName evidence="1">Holliday junction branch migration complex subunit RuvA</fullName>
    </recommendedName>
</protein>
<comment type="function">
    <text evidence="1">The RuvA-RuvB-RuvC complex processes Holliday junction (HJ) DNA during genetic recombination and DNA repair, while the RuvA-RuvB complex plays an important role in the rescue of blocked DNA replication forks via replication fork reversal (RFR). RuvA specifically binds to HJ cruciform DNA, conferring on it an open structure. The RuvB hexamer acts as an ATP-dependent pump, pulling dsDNA into and through the RuvAB complex. HJ branch migration allows RuvC to scan DNA until it finds its consensus sequence, where it cleaves and resolves the cruciform DNA.</text>
</comment>
<comment type="subunit">
    <text evidence="1">Homotetramer. Forms an RuvA(8)-RuvB(12)-Holliday junction (HJ) complex. HJ DNA is sandwiched between 2 RuvA tetramers; dsDNA enters through RuvA and exits via RuvB. An RuvB hexamer assembles on each DNA strand where it exits the tetramer. Each RuvB hexamer is contacted by two RuvA subunits (via domain III) on 2 adjacent RuvB subunits; this complex drives branch migration. In the full resolvosome a probable DNA-RuvA(4)-RuvB(12)-RuvC(2) complex forms which resolves the HJ.</text>
</comment>
<comment type="subcellular location">
    <subcellularLocation>
        <location evidence="1">Cytoplasm</location>
    </subcellularLocation>
</comment>
<comment type="domain">
    <text evidence="1">Has three domains with a flexible linker between the domains II and III and assumes an 'L' shape. Domain III is highly mobile and contacts RuvB.</text>
</comment>
<comment type="similarity">
    <text evidence="1">Belongs to the RuvA family.</text>
</comment>
<name>RUVA_PROMH</name>
<feature type="chain" id="PRO_1000090354" description="Holliday junction branch migration complex subunit RuvA">
    <location>
        <begin position="1"/>
        <end position="207"/>
    </location>
</feature>
<feature type="region of interest" description="Domain I" evidence="1">
    <location>
        <begin position="1"/>
        <end position="65"/>
    </location>
</feature>
<feature type="region of interest" description="Domain II" evidence="1">
    <location>
        <begin position="66"/>
        <end position="143"/>
    </location>
</feature>
<feature type="region of interest" description="Flexible linker" evidence="1">
    <location>
        <begin position="144"/>
        <end position="158"/>
    </location>
</feature>
<feature type="region of interest" description="Domain III" evidence="1">
    <location>
        <begin position="159"/>
        <end position="207"/>
    </location>
</feature>
<gene>
    <name evidence="1" type="primary">ruvA</name>
    <name type="ordered locus">PMI1115</name>
</gene>
<accession>B4ETP7</accession>
<reference key="1">
    <citation type="journal article" date="2008" name="J. Bacteriol.">
        <title>Complete genome sequence of uropathogenic Proteus mirabilis, a master of both adherence and motility.</title>
        <authorList>
            <person name="Pearson M.M."/>
            <person name="Sebaihia M."/>
            <person name="Churcher C."/>
            <person name="Quail M.A."/>
            <person name="Seshasayee A.S."/>
            <person name="Luscombe N.M."/>
            <person name="Abdellah Z."/>
            <person name="Arrosmith C."/>
            <person name="Atkin B."/>
            <person name="Chillingworth T."/>
            <person name="Hauser H."/>
            <person name="Jagels K."/>
            <person name="Moule S."/>
            <person name="Mungall K."/>
            <person name="Norbertczak H."/>
            <person name="Rabbinowitsch E."/>
            <person name="Walker D."/>
            <person name="Whithead S."/>
            <person name="Thomson N.R."/>
            <person name="Rather P.N."/>
            <person name="Parkhill J."/>
            <person name="Mobley H.L.T."/>
        </authorList>
    </citation>
    <scope>NUCLEOTIDE SEQUENCE [LARGE SCALE GENOMIC DNA]</scope>
    <source>
        <strain>HI4320</strain>
    </source>
</reference>
<proteinExistence type="inferred from homology"/>
<keyword id="KW-0963">Cytoplasm</keyword>
<keyword id="KW-0227">DNA damage</keyword>
<keyword id="KW-0233">DNA recombination</keyword>
<keyword id="KW-0234">DNA repair</keyword>
<keyword id="KW-0238">DNA-binding</keyword>
<keyword id="KW-1185">Reference proteome</keyword>
<evidence type="ECO:0000255" key="1">
    <source>
        <dbReference type="HAMAP-Rule" id="MF_00031"/>
    </source>
</evidence>
<organism>
    <name type="scientific">Proteus mirabilis (strain HI4320)</name>
    <dbReference type="NCBI Taxonomy" id="529507"/>
    <lineage>
        <taxon>Bacteria</taxon>
        <taxon>Pseudomonadati</taxon>
        <taxon>Pseudomonadota</taxon>
        <taxon>Gammaproteobacteria</taxon>
        <taxon>Enterobacterales</taxon>
        <taxon>Morganellaceae</taxon>
        <taxon>Proteus</taxon>
    </lineage>
</organism>
<sequence>MIGRIRGVILEKQPPVVLIEAGNGVGYEINMPMTCFYELPDIGQEAIIYTQFIVREDAQLLYGFNQKQERALFRELIKVNGVGPKLALAILSGMSARQFVTAIENESISSLVKLPGVGKKTAERLVVEMKDRFKGLNGDLFEQNGDIELPASASSKAPSAADIEAEASAALIALGYKPQEAAKMISRVATAGADSETLIKEALRAAI</sequence>